<comment type="function">
    <text evidence="5 6">Recruits the ubiquitination machinery to RNA polymerase II for polyubiquitination, removal and degradation, when the transcription-coupled nucleotide excision repair (TC-NER) machinery fails to resolve DNA damage (PubMed:35633597). May promote the degradation of ANXA2 (PubMed:27121050).</text>
</comment>
<comment type="subunit">
    <text evidence="5">May interact with ANXA2.</text>
</comment>
<comment type="interaction">
    <interactant intactId="EBI-2514383">
        <id>Q5T6F2</id>
    </interactant>
    <interactant intactId="EBI-12015080">
        <id>Q8WXK3-2</id>
        <label>ASB13</label>
    </interactant>
    <organismsDiffer>false</organismsDiffer>
    <experiments>3</experiments>
</comment>
<comment type="interaction">
    <interactant intactId="EBI-2514383">
        <id>Q5T6F2</id>
    </interactant>
    <interactant intactId="EBI-1166928">
        <id>Q8N5M1</id>
        <label>ATPAF2</label>
    </interactant>
    <organismsDiffer>false</organismsDiffer>
    <experiments>3</experiments>
</comment>
<comment type="interaction">
    <interactant intactId="EBI-2514383">
        <id>Q5T6F2</id>
    </interactant>
    <interactant intactId="EBI-11524452">
        <id>Q8N9N5-2</id>
        <label>BANP</label>
    </interactant>
    <organismsDiffer>false</organismsDiffer>
    <experiments>3</experiments>
</comment>
<comment type="interaction">
    <interactant intactId="EBI-2514383">
        <id>Q5T6F2</id>
    </interactant>
    <interactant intactId="EBI-12809220">
        <id>Q5SWW7</id>
        <label>C10orf55</label>
    </interactant>
    <organismsDiffer>false</organismsDiffer>
    <experiments>3</experiments>
</comment>
<comment type="interaction">
    <interactant intactId="EBI-2514383">
        <id>Q5T6F2</id>
    </interactant>
    <interactant intactId="EBI-12884642">
        <id>Q03060-25</id>
        <label>CREM</label>
    </interactant>
    <organismsDiffer>false</organismsDiffer>
    <experiments>3</experiments>
</comment>
<comment type="interaction">
    <interactant intactId="EBI-2514383">
        <id>Q5T6F2</id>
    </interactant>
    <interactant intactId="EBI-724310">
        <id>Q15038</id>
        <label>DAZAP2</label>
    </interactant>
    <organismsDiffer>false</organismsDiffer>
    <experiments>3</experiments>
</comment>
<comment type="interaction">
    <interactant intactId="EBI-2514383">
        <id>Q5T6F2</id>
    </interactant>
    <interactant intactId="EBI-743105">
        <id>Q5JVL4</id>
        <label>EFHC1</label>
    </interactant>
    <organismsDiffer>false</organismsDiffer>
    <experiments>3</experiments>
</comment>
<comment type="interaction">
    <interactant intactId="EBI-2514383">
        <id>Q5T6F2</id>
    </interactant>
    <interactant intactId="EBI-12193763">
        <id>A1KXE4-2</id>
        <label>FAM168B</label>
    </interactant>
    <organismsDiffer>false</organismsDiffer>
    <experiments>3</experiments>
</comment>
<comment type="interaction">
    <interactant intactId="EBI-2514383">
        <id>Q5T6F2</id>
    </interactant>
    <interactant intactId="EBI-10242151">
        <id>Q53EP0-3</id>
        <label>FNDC3B</label>
    </interactant>
    <organismsDiffer>false</organismsDiffer>
    <experiments>3</experiments>
</comment>
<comment type="interaction">
    <interactant intactId="EBI-2514383">
        <id>Q5T6F2</id>
    </interactant>
    <interactant intactId="EBI-1759806">
        <id>O75593</id>
        <label>FOXH1</label>
    </interactant>
    <organismsDiffer>false</organismsDiffer>
    <experiments>3</experiments>
</comment>
<comment type="interaction">
    <interactant intactId="EBI-2514383">
        <id>Q5T6F2</id>
    </interactant>
    <interactant intactId="EBI-740220">
        <id>O14964</id>
        <label>HGS</label>
    </interactant>
    <organismsDiffer>false</organismsDiffer>
    <experiments>3</experiments>
</comment>
<comment type="interaction">
    <interactant intactId="EBI-2514383">
        <id>Q5T6F2</id>
    </interactant>
    <interactant intactId="EBI-11955401">
        <id>Q86VF2-5</id>
        <label>IGFN1</label>
    </interactant>
    <organismsDiffer>false</organismsDiffer>
    <experiments>3</experiments>
</comment>
<comment type="interaction">
    <interactant intactId="EBI-2514383">
        <id>Q5T6F2</id>
    </interactant>
    <interactant intactId="EBI-6426064">
        <id>Q2M1V0</id>
        <label>ISX</label>
    </interactant>
    <organismsDiffer>false</organismsDiffer>
    <experiments>3</experiments>
</comment>
<comment type="interaction">
    <interactant intactId="EBI-2514383">
        <id>Q5T6F2</id>
    </interactant>
    <interactant intactId="EBI-9090173">
        <id>P0C870</id>
        <label>JMJD7</label>
    </interactant>
    <organismsDiffer>false</organismsDiffer>
    <experiments>3</experiments>
</comment>
<comment type="interaction">
    <interactant intactId="EBI-2514383">
        <id>Q5T6F2</id>
    </interactant>
    <interactant intactId="EBI-2556193">
        <id>Q63ZY3</id>
        <label>KANK2</label>
    </interactant>
    <organismsDiffer>false</organismsDiffer>
    <experiments>3</experiments>
</comment>
<comment type="interaction">
    <interactant intactId="EBI-2514383">
        <id>Q5T6F2</id>
    </interactant>
    <interactant intactId="EBI-11992140">
        <id>Q3LI76</id>
        <label>KRTAP15-1</label>
    </interactant>
    <organismsDiffer>false</organismsDiffer>
    <experiments>3</experiments>
</comment>
<comment type="interaction">
    <interactant intactId="EBI-2514383">
        <id>Q5T6F2</id>
    </interactant>
    <interactant intactId="EBI-13287659">
        <id>P06239-3</id>
        <label>LCK</label>
    </interactant>
    <organismsDiffer>false</organismsDiffer>
    <experiments>3</experiments>
</comment>
<comment type="interaction">
    <interactant intactId="EBI-2514383">
        <id>Q5T6F2</id>
    </interactant>
    <interactant intactId="EBI-12025760">
        <id>Q86UR1-2</id>
        <label>NOXA1</label>
    </interactant>
    <organismsDiffer>false</organismsDiffer>
    <experiments>3</experiments>
</comment>
<comment type="interaction">
    <interactant intactId="EBI-2514383">
        <id>Q5T6F2</id>
    </interactant>
    <interactant intactId="EBI-3932727">
        <id>Q99743</id>
        <label>NPAS2</label>
    </interactant>
    <organismsDiffer>false</organismsDiffer>
    <experiments>3</experiments>
</comment>
<comment type="interaction">
    <interactant intactId="EBI-2514383">
        <id>Q5T6F2</id>
    </interactant>
    <interactant intactId="EBI-591778">
        <id>P61970</id>
        <label>NUTF2</label>
    </interactant>
    <organismsDiffer>false</organismsDiffer>
    <experiments>3</experiments>
</comment>
<comment type="interaction">
    <interactant intactId="EBI-2514383">
        <id>Q5T6F2</id>
    </interactant>
    <interactant intactId="EBI-740446">
        <id>P32242</id>
        <label>OTX1</label>
    </interactant>
    <organismsDiffer>false</organismsDiffer>
    <experiments>3</experiments>
</comment>
<comment type="interaction">
    <interactant intactId="EBI-2514383">
        <id>Q5T6F2</id>
    </interactant>
    <interactant intactId="EBI-373552">
        <id>Q96CS7</id>
        <label>PLEKHB2</label>
    </interactant>
    <organismsDiffer>false</organismsDiffer>
    <experiments>3</experiments>
</comment>
<comment type="interaction">
    <interactant intactId="EBI-2514383">
        <id>Q5T6F2</id>
    </interactant>
    <interactant intactId="EBI-712311">
        <id>P67775</id>
        <label>PPP2CA</label>
    </interactant>
    <organismsDiffer>false</organismsDiffer>
    <experiments>3</experiments>
</comment>
<comment type="interaction">
    <interactant intactId="EBI-2514383">
        <id>Q5T6F2</id>
    </interactant>
    <interactant intactId="EBI-18393698">
        <id>Q2L4Q9</id>
        <label>PRSS53</label>
    </interactant>
    <organismsDiffer>false</organismsDiffer>
    <experiments>3</experiments>
</comment>
<comment type="interaction">
    <interactant intactId="EBI-2514383">
        <id>Q5T6F2</id>
    </interactant>
    <interactant intactId="EBI-372312">
        <id>P28062-2</id>
        <label>PSMB8</label>
    </interactant>
    <organismsDiffer>false</organismsDiffer>
    <experiments>3</experiments>
</comment>
<comment type="interaction">
    <interactant intactId="EBI-2514383">
        <id>Q5T6F2</id>
    </interactant>
    <interactant intactId="EBI-740343">
        <id>Q93062-3</id>
        <label>RBPMS</label>
    </interactant>
    <organismsDiffer>false</organismsDiffer>
    <experiments>3</experiments>
</comment>
<comment type="interaction">
    <interactant intactId="EBI-2514383">
        <id>Q5T6F2</id>
    </interactant>
    <interactant intactId="EBI-372094">
        <id>Q9BQY4</id>
        <label>RHOXF2</label>
    </interactant>
    <organismsDiffer>false</organismsDiffer>
    <experiments>3</experiments>
</comment>
<comment type="interaction">
    <interactant intactId="EBI-2514383">
        <id>Q5T6F2</id>
    </interactant>
    <interactant intactId="EBI-79084">
        <id>Q92529</id>
        <label>SHC3</label>
    </interactant>
    <organismsDiffer>false</organismsDiffer>
    <experiments>3</experiments>
</comment>
<comment type="interaction">
    <interactant intactId="EBI-2514383">
        <id>Q5T6F2</id>
    </interactant>
    <interactant intactId="EBI-11959123">
        <id>Q99932-2</id>
        <label>SPAG8</label>
    </interactant>
    <organismsDiffer>false</organismsDiffer>
    <experiments>3</experiments>
</comment>
<comment type="interaction">
    <interactant intactId="EBI-2514383">
        <id>Q5T6F2</id>
    </interactant>
    <interactant intactId="EBI-743976">
        <id>Q96LM6</id>
        <label>SPMIP9</label>
    </interactant>
    <organismsDiffer>false</organismsDiffer>
    <experiments>3</experiments>
</comment>
<comment type="interaction">
    <interactant intactId="EBI-2514383">
        <id>Q5T6F2</id>
    </interactant>
    <interactant intactId="EBI-752030">
        <id>Q96A09</id>
        <label>TENT5B</label>
    </interactant>
    <organismsDiffer>false</organismsDiffer>
    <experiments>3</experiments>
</comment>
<comment type="interaction">
    <interactant intactId="EBI-2514383">
        <id>Q5T6F2</id>
    </interactant>
    <interactant intactId="EBI-947859">
        <id>Q99973</id>
        <label>TEP1</label>
    </interactant>
    <organismsDiffer>false</organismsDiffer>
    <experiments>3</experiments>
</comment>
<comment type="interaction">
    <interactant intactId="EBI-2514383">
        <id>Q5T6F2</id>
    </interactant>
    <interactant intactId="EBI-357061">
        <id>Q92734</id>
        <label>TFG</label>
    </interactant>
    <organismsDiffer>false</organismsDiffer>
    <experiments>3</experiments>
</comment>
<comment type="interaction">
    <interactant intactId="EBI-2514383">
        <id>Q5T6F2</id>
    </interactant>
    <interactant intactId="EBI-11741437">
        <id>Q08117-2</id>
        <label>TLE5</label>
    </interactant>
    <organismsDiffer>false</organismsDiffer>
    <experiments>3</experiments>
</comment>
<comment type="interaction">
    <interactant intactId="EBI-2514383">
        <id>Q5T6F2</id>
    </interactant>
    <interactant intactId="EBI-396540">
        <id>Q12888</id>
        <label>TP53BP1</label>
    </interactant>
    <organismsDiffer>false</organismsDiffer>
    <experiments>3</experiments>
</comment>
<comment type="interaction">
    <interactant intactId="EBI-2514383">
        <id>Q5T6F2</id>
    </interactant>
    <interactant intactId="EBI-8451480">
        <id>O75865-2</id>
        <label>TRAPPC6A</label>
    </interactant>
    <organismsDiffer>false</organismsDiffer>
    <experiments>3</experiments>
</comment>
<comment type="interaction">
    <interactant intactId="EBI-2514383">
        <id>Q5T6F2</id>
    </interactant>
    <interactant intactId="EBI-10191303">
        <id>O95231</id>
        <label>VENTX</label>
    </interactant>
    <organismsDiffer>false</organismsDiffer>
    <experiments>3</experiments>
</comment>
<comment type="interaction">
    <interactant intactId="EBI-2514383">
        <id>Q5T6F2</id>
    </interactant>
    <interactant intactId="EBI-2559305">
        <id>A5D8V6</id>
        <label>VPS37C</label>
    </interactant>
    <organismsDiffer>false</organismsDiffer>
    <experiments>3</experiments>
</comment>
<comment type="interaction">
    <interactant intactId="EBI-2514383">
        <id>Q5T6F2</id>
    </interactant>
    <interactant intactId="EBI-2563542">
        <id>Q9BUR4</id>
        <label>WRAP53</label>
    </interactant>
    <organismsDiffer>false</organismsDiffer>
    <experiments>3</experiments>
</comment>
<comment type="interaction">
    <interactant intactId="EBI-2514383">
        <id>Q5T6F2</id>
    </interactant>
    <interactant intactId="EBI-750454">
        <id>Q96EJ4</id>
    </interactant>
    <organismsDiffer>false</organismsDiffer>
    <experiments>3</experiments>
</comment>
<comment type="subcellular location">
    <subcellularLocation>
        <location evidence="6">Nucleus</location>
    </subcellularLocation>
    <subcellularLocation>
        <location evidence="6">Chromosome</location>
    </subcellularLocation>
    <subcellularLocation>
        <location evidence="5 6">Cytoplasm</location>
    </subcellularLocation>
    <text evidence="6">Associates with nuclear chromatin.</text>
</comment>
<comment type="alternative products">
    <event type="alternative splicing"/>
    <isoform>
        <id>Q5T6F2-1</id>
        <name>1</name>
        <sequence type="displayed"/>
    </isoform>
    <isoform>
        <id>Q5T6F2-2</id>
        <name>2</name>
        <sequence type="described" ref="VSP_056073"/>
    </isoform>
</comment>
<comment type="disease">
    <text evidence="5">Reduced expression of UBAP2 correlates with hepatocellular carcinoma tumor progression.</text>
</comment>
<comment type="sequence caution" evidence="9">
    <conflict type="erroneous initiation">
        <sequence resource="EMBL-CDS" id="AAI11763"/>
    </conflict>
</comment>
<comment type="sequence caution" evidence="9">
    <conflict type="erroneous initiation">
        <sequence resource="EMBL-CDS" id="BAC11266"/>
    </conflict>
</comment>
<name>UBAP2_HUMAN</name>
<reference evidence="9 14" key="1">
    <citation type="journal article" date="2004" name="Nat. Genet.">
        <title>Complete sequencing and characterization of 21,243 full-length human cDNAs.</title>
        <authorList>
            <person name="Ota T."/>
            <person name="Suzuki Y."/>
            <person name="Nishikawa T."/>
            <person name="Otsuki T."/>
            <person name="Sugiyama T."/>
            <person name="Irie R."/>
            <person name="Wakamatsu A."/>
            <person name="Hayashi K."/>
            <person name="Sato H."/>
            <person name="Nagai K."/>
            <person name="Kimura K."/>
            <person name="Makita H."/>
            <person name="Sekine M."/>
            <person name="Obayashi M."/>
            <person name="Nishi T."/>
            <person name="Shibahara T."/>
            <person name="Tanaka T."/>
            <person name="Ishii S."/>
            <person name="Yamamoto J."/>
            <person name="Saito K."/>
            <person name="Kawai Y."/>
            <person name="Isono Y."/>
            <person name="Nakamura Y."/>
            <person name="Nagahari K."/>
            <person name="Murakami K."/>
            <person name="Yasuda T."/>
            <person name="Iwayanagi T."/>
            <person name="Wagatsuma M."/>
            <person name="Shiratori A."/>
            <person name="Sudo H."/>
            <person name="Hosoiri T."/>
            <person name="Kaku Y."/>
            <person name="Kodaira H."/>
            <person name="Kondo H."/>
            <person name="Sugawara M."/>
            <person name="Takahashi M."/>
            <person name="Kanda K."/>
            <person name="Yokoi T."/>
            <person name="Furuya T."/>
            <person name="Kikkawa E."/>
            <person name="Omura Y."/>
            <person name="Abe K."/>
            <person name="Kamihara K."/>
            <person name="Katsuta N."/>
            <person name="Sato K."/>
            <person name="Tanikawa M."/>
            <person name="Yamazaki M."/>
            <person name="Ninomiya K."/>
            <person name="Ishibashi T."/>
            <person name="Yamashita H."/>
            <person name="Murakawa K."/>
            <person name="Fujimori K."/>
            <person name="Tanai H."/>
            <person name="Kimata M."/>
            <person name="Watanabe M."/>
            <person name="Hiraoka S."/>
            <person name="Chiba Y."/>
            <person name="Ishida S."/>
            <person name="Ono Y."/>
            <person name="Takiguchi S."/>
            <person name="Watanabe S."/>
            <person name="Yosida M."/>
            <person name="Hotuta T."/>
            <person name="Kusano J."/>
            <person name="Kanehori K."/>
            <person name="Takahashi-Fujii A."/>
            <person name="Hara H."/>
            <person name="Tanase T.-O."/>
            <person name="Nomura Y."/>
            <person name="Togiya S."/>
            <person name="Komai F."/>
            <person name="Hara R."/>
            <person name="Takeuchi K."/>
            <person name="Arita M."/>
            <person name="Imose N."/>
            <person name="Musashino K."/>
            <person name="Yuuki H."/>
            <person name="Oshima A."/>
            <person name="Sasaki N."/>
            <person name="Aotsuka S."/>
            <person name="Yoshikawa Y."/>
            <person name="Matsunawa H."/>
            <person name="Ichihara T."/>
            <person name="Shiohata N."/>
            <person name="Sano S."/>
            <person name="Moriya S."/>
            <person name="Momiyama H."/>
            <person name="Satoh N."/>
            <person name="Takami S."/>
            <person name="Terashima Y."/>
            <person name="Suzuki O."/>
            <person name="Nakagawa S."/>
            <person name="Senoh A."/>
            <person name="Mizoguchi H."/>
            <person name="Goto Y."/>
            <person name="Shimizu F."/>
            <person name="Wakebe H."/>
            <person name="Hishigaki H."/>
            <person name="Watanabe T."/>
            <person name="Sugiyama A."/>
            <person name="Takemoto M."/>
            <person name="Kawakami B."/>
            <person name="Yamazaki M."/>
            <person name="Watanabe K."/>
            <person name="Kumagai A."/>
            <person name="Itakura S."/>
            <person name="Fukuzumi Y."/>
            <person name="Fujimori Y."/>
            <person name="Komiyama M."/>
            <person name="Tashiro H."/>
            <person name="Tanigami A."/>
            <person name="Fujiwara T."/>
            <person name="Ono T."/>
            <person name="Yamada K."/>
            <person name="Fujii Y."/>
            <person name="Ozaki K."/>
            <person name="Hirao M."/>
            <person name="Ohmori Y."/>
            <person name="Kawabata A."/>
            <person name="Hikiji T."/>
            <person name="Kobatake N."/>
            <person name="Inagaki H."/>
            <person name="Ikema Y."/>
            <person name="Okamoto S."/>
            <person name="Okitani R."/>
            <person name="Kawakami T."/>
            <person name="Noguchi S."/>
            <person name="Itoh T."/>
            <person name="Shigeta K."/>
            <person name="Senba T."/>
            <person name="Matsumura K."/>
            <person name="Nakajima Y."/>
            <person name="Mizuno T."/>
            <person name="Morinaga M."/>
            <person name="Sasaki M."/>
            <person name="Togashi T."/>
            <person name="Oyama M."/>
            <person name="Hata H."/>
            <person name="Watanabe M."/>
            <person name="Komatsu T."/>
            <person name="Mizushima-Sugano J."/>
            <person name="Satoh T."/>
            <person name="Shirai Y."/>
            <person name="Takahashi Y."/>
            <person name="Nakagawa K."/>
            <person name="Okumura K."/>
            <person name="Nagase T."/>
            <person name="Nomura N."/>
            <person name="Kikuchi H."/>
            <person name="Masuho Y."/>
            <person name="Yamashita R."/>
            <person name="Nakai K."/>
            <person name="Yada T."/>
            <person name="Nakamura Y."/>
            <person name="Ohara O."/>
            <person name="Isogai T."/>
            <person name="Sugano S."/>
        </authorList>
    </citation>
    <scope>NUCLEOTIDE SEQUENCE [LARGE SCALE MRNA] (ISOFORM 2)</scope>
    <scope>NUCLEOTIDE SEQUENCE [LARGE SCALE MRNA] OF 511-1119 (ISOFORM 1)</scope>
    <scope>VARIANTS SER-606 AND VAL-756</scope>
    <source>
        <tissue>Testis</tissue>
    </source>
</reference>
<reference evidence="12" key="2">
    <citation type="journal article" date="2004" name="Nature">
        <title>DNA sequence and analysis of human chromosome 9.</title>
        <authorList>
            <person name="Humphray S.J."/>
            <person name="Oliver K."/>
            <person name="Hunt A.R."/>
            <person name="Plumb R.W."/>
            <person name="Loveland J.E."/>
            <person name="Howe K.L."/>
            <person name="Andrews T.D."/>
            <person name="Searle S."/>
            <person name="Hunt S.E."/>
            <person name="Scott C.E."/>
            <person name="Jones M.C."/>
            <person name="Ainscough R."/>
            <person name="Almeida J.P."/>
            <person name="Ambrose K.D."/>
            <person name="Ashwell R.I.S."/>
            <person name="Babbage A.K."/>
            <person name="Babbage S."/>
            <person name="Bagguley C.L."/>
            <person name="Bailey J."/>
            <person name="Banerjee R."/>
            <person name="Barker D.J."/>
            <person name="Barlow K.F."/>
            <person name="Bates K."/>
            <person name="Beasley H."/>
            <person name="Beasley O."/>
            <person name="Bird C.P."/>
            <person name="Bray-Allen S."/>
            <person name="Brown A.J."/>
            <person name="Brown J.Y."/>
            <person name="Burford D."/>
            <person name="Burrill W."/>
            <person name="Burton J."/>
            <person name="Carder C."/>
            <person name="Carter N.P."/>
            <person name="Chapman J.C."/>
            <person name="Chen Y."/>
            <person name="Clarke G."/>
            <person name="Clark S.Y."/>
            <person name="Clee C.M."/>
            <person name="Clegg S."/>
            <person name="Collier R.E."/>
            <person name="Corby N."/>
            <person name="Crosier M."/>
            <person name="Cummings A.T."/>
            <person name="Davies J."/>
            <person name="Dhami P."/>
            <person name="Dunn M."/>
            <person name="Dutta I."/>
            <person name="Dyer L.W."/>
            <person name="Earthrowl M.E."/>
            <person name="Faulkner L."/>
            <person name="Fleming C.J."/>
            <person name="Frankish A."/>
            <person name="Frankland J.A."/>
            <person name="French L."/>
            <person name="Fricker D.G."/>
            <person name="Garner P."/>
            <person name="Garnett J."/>
            <person name="Ghori J."/>
            <person name="Gilbert J.G.R."/>
            <person name="Glison C."/>
            <person name="Grafham D.V."/>
            <person name="Gribble S."/>
            <person name="Griffiths C."/>
            <person name="Griffiths-Jones S."/>
            <person name="Grocock R."/>
            <person name="Guy J."/>
            <person name="Hall R.E."/>
            <person name="Hammond S."/>
            <person name="Harley J.L."/>
            <person name="Harrison E.S.I."/>
            <person name="Hart E.A."/>
            <person name="Heath P.D."/>
            <person name="Henderson C.D."/>
            <person name="Hopkins B.L."/>
            <person name="Howard P.J."/>
            <person name="Howden P.J."/>
            <person name="Huckle E."/>
            <person name="Johnson C."/>
            <person name="Johnson D."/>
            <person name="Joy A.A."/>
            <person name="Kay M."/>
            <person name="Keenan S."/>
            <person name="Kershaw J.K."/>
            <person name="Kimberley A.M."/>
            <person name="King A."/>
            <person name="Knights A."/>
            <person name="Laird G.K."/>
            <person name="Langford C."/>
            <person name="Lawlor S."/>
            <person name="Leongamornlert D.A."/>
            <person name="Leversha M."/>
            <person name="Lloyd C."/>
            <person name="Lloyd D.M."/>
            <person name="Lovell J."/>
            <person name="Martin S."/>
            <person name="Mashreghi-Mohammadi M."/>
            <person name="Matthews L."/>
            <person name="McLaren S."/>
            <person name="McLay K.E."/>
            <person name="McMurray A."/>
            <person name="Milne S."/>
            <person name="Nickerson T."/>
            <person name="Nisbett J."/>
            <person name="Nordsiek G."/>
            <person name="Pearce A.V."/>
            <person name="Peck A.I."/>
            <person name="Porter K.M."/>
            <person name="Pandian R."/>
            <person name="Pelan S."/>
            <person name="Phillimore B."/>
            <person name="Povey S."/>
            <person name="Ramsey Y."/>
            <person name="Rand V."/>
            <person name="Scharfe M."/>
            <person name="Sehra H.K."/>
            <person name="Shownkeen R."/>
            <person name="Sims S.K."/>
            <person name="Skuce C.D."/>
            <person name="Smith M."/>
            <person name="Steward C.A."/>
            <person name="Swarbreck D."/>
            <person name="Sycamore N."/>
            <person name="Tester J."/>
            <person name="Thorpe A."/>
            <person name="Tracey A."/>
            <person name="Tromans A."/>
            <person name="Thomas D.W."/>
            <person name="Wall M."/>
            <person name="Wallis J.M."/>
            <person name="West A.P."/>
            <person name="Whitehead S.L."/>
            <person name="Willey D.L."/>
            <person name="Williams S.A."/>
            <person name="Wilming L."/>
            <person name="Wray P.W."/>
            <person name="Young L."/>
            <person name="Ashurst J.L."/>
            <person name="Coulson A."/>
            <person name="Blocker H."/>
            <person name="Durbin R.M."/>
            <person name="Sulston J.E."/>
            <person name="Hubbard T."/>
            <person name="Jackson M.J."/>
            <person name="Bentley D.R."/>
            <person name="Beck S."/>
            <person name="Rogers J."/>
            <person name="Dunham I."/>
        </authorList>
    </citation>
    <scope>NUCLEOTIDE SEQUENCE [LARGE SCALE GENOMIC DNA]</scope>
</reference>
<reference evidence="9 11" key="3">
    <citation type="journal article" date="2004" name="Genome Res.">
        <title>The status, quality, and expansion of the NIH full-length cDNA project: the Mammalian Gene Collection (MGC).</title>
        <authorList>
            <consortium name="The MGC Project Team"/>
        </authorList>
    </citation>
    <scope>NUCLEOTIDE SEQUENCE [LARGE SCALE MRNA] OF 178-669 AND 857-1119 (ISOFORM 1)</scope>
    <source>
        <tissue evidence="10">Brain</tissue>
    </source>
</reference>
<reference evidence="9 13" key="4">
    <citation type="journal article" date="2000" name="DNA Res.">
        <title>Prediction of the coding sequences of unidentified human genes. XVII. The complete sequences of 100 new cDNA clones from brain which code for large proteins in vitro.</title>
        <authorList>
            <person name="Nagase T."/>
            <person name="Kikuno R."/>
            <person name="Ishikawa K."/>
            <person name="Hirosawa M."/>
            <person name="Ohara O."/>
        </authorList>
    </citation>
    <scope>NUCLEOTIDE SEQUENCE [LARGE SCALE MRNA] OF 363-1119 (ISOFORM 1)</scope>
    <scope>VARIANT VAL-756</scope>
    <source>
        <tissue evidence="3">Brain</tissue>
    </source>
</reference>
<reference key="5">
    <citation type="journal article" date="2004" name="Anal. Chem.">
        <title>Robust phosphoproteomic profiling of tyrosine phosphorylation sites from human T cells using immobilized metal affinity chromatography and tandem mass spectrometry.</title>
        <authorList>
            <person name="Brill L.M."/>
            <person name="Salomon A.R."/>
            <person name="Ficarro S.B."/>
            <person name="Mukherji M."/>
            <person name="Stettler-Gill M."/>
            <person name="Peters E.C."/>
        </authorList>
    </citation>
    <scope>IDENTIFICATION BY MASS SPECTROMETRY [LARGE SCALE ANALYSIS]</scope>
    <source>
        <tissue>Leukemic T-cell</tissue>
    </source>
</reference>
<reference key="6">
    <citation type="journal article" date="2005" name="Nat. Biotechnol.">
        <title>Immunoaffinity profiling of tyrosine phosphorylation in cancer cells.</title>
        <authorList>
            <person name="Rush J."/>
            <person name="Moritz A."/>
            <person name="Lee K.A."/>
            <person name="Guo A."/>
            <person name="Goss V.L."/>
            <person name="Spek E.J."/>
            <person name="Zhang H."/>
            <person name="Zha X.-M."/>
            <person name="Polakiewicz R.D."/>
            <person name="Comb M.J."/>
        </authorList>
    </citation>
    <scope>IDENTIFICATION BY MASS SPECTROMETRY [LARGE SCALE ANALYSIS]</scope>
</reference>
<reference key="7">
    <citation type="journal article" date="2008" name="Proc. Natl. Acad. Sci. U.S.A.">
        <title>A quantitative atlas of mitotic phosphorylation.</title>
        <authorList>
            <person name="Dephoure N."/>
            <person name="Zhou C."/>
            <person name="Villen J."/>
            <person name="Beausoleil S.A."/>
            <person name="Bakalarski C.E."/>
            <person name="Elledge S.J."/>
            <person name="Gygi S.P."/>
        </authorList>
    </citation>
    <scope>PHOSPHORYLATION [LARGE SCALE ANALYSIS] AT SER-432 AND SER-473</scope>
    <scope>IDENTIFICATION BY MASS SPECTROMETRY [LARGE SCALE ANALYSIS]</scope>
    <source>
        <tissue>Cervix carcinoma</tissue>
    </source>
</reference>
<reference key="8">
    <citation type="journal article" date="2010" name="Sci. Signal.">
        <title>Quantitative phosphoproteomics reveals widespread full phosphorylation site occupancy during mitosis.</title>
        <authorList>
            <person name="Olsen J.V."/>
            <person name="Vermeulen M."/>
            <person name="Santamaria A."/>
            <person name="Kumar C."/>
            <person name="Miller M.L."/>
            <person name="Jensen L.J."/>
            <person name="Gnad F."/>
            <person name="Cox J."/>
            <person name="Jensen T.S."/>
            <person name="Nigg E.A."/>
            <person name="Brunak S."/>
            <person name="Mann M."/>
        </authorList>
    </citation>
    <scope>PHOSPHORYLATION [LARGE SCALE ANALYSIS] AT SER-473</scope>
    <scope>IDENTIFICATION BY MASS SPECTROMETRY [LARGE SCALE ANALYSIS]</scope>
    <source>
        <tissue>Cervix carcinoma</tissue>
    </source>
</reference>
<reference key="9">
    <citation type="journal article" date="2011" name="BMC Syst. Biol.">
        <title>Initial characterization of the human central proteome.</title>
        <authorList>
            <person name="Burkard T.R."/>
            <person name="Planyavsky M."/>
            <person name="Kaupe I."/>
            <person name="Breitwieser F.P."/>
            <person name="Buerckstuemmer T."/>
            <person name="Bennett K.L."/>
            <person name="Superti-Furga G."/>
            <person name="Colinge J."/>
        </authorList>
    </citation>
    <scope>IDENTIFICATION BY MASS SPECTROMETRY [LARGE SCALE ANALYSIS]</scope>
</reference>
<reference key="10">
    <citation type="journal article" date="2013" name="J. Proteome Res.">
        <title>Toward a comprehensive characterization of a human cancer cell phosphoproteome.</title>
        <authorList>
            <person name="Zhou H."/>
            <person name="Di Palma S."/>
            <person name="Preisinger C."/>
            <person name="Peng M."/>
            <person name="Polat A.N."/>
            <person name="Heck A.J."/>
            <person name="Mohammed S."/>
        </authorList>
    </citation>
    <scope>PHOSPHORYLATION [LARGE SCALE ANALYSIS] AT SER-432; SER-439; SER-473 AND SER-630</scope>
    <scope>IDENTIFICATION BY MASS SPECTROMETRY [LARGE SCALE ANALYSIS]</scope>
    <source>
        <tissue>Cervix carcinoma</tissue>
        <tissue>Erythroleukemia</tissue>
    </source>
</reference>
<reference key="11">
    <citation type="journal article" date="2014" name="Mol. Cell. Proteomics">
        <title>Immunoaffinity enrichment and mass spectrometry analysis of protein methylation.</title>
        <authorList>
            <person name="Guo A."/>
            <person name="Gu H."/>
            <person name="Zhou J."/>
            <person name="Mulhern D."/>
            <person name="Wang Y."/>
            <person name="Lee K.A."/>
            <person name="Yang V."/>
            <person name="Aguiar M."/>
            <person name="Kornhauser J."/>
            <person name="Jia X."/>
            <person name="Ren J."/>
            <person name="Beausoleil S.A."/>
            <person name="Silva J.C."/>
            <person name="Vemulapalli V."/>
            <person name="Bedford M.T."/>
            <person name="Comb M.J."/>
        </authorList>
    </citation>
    <scope>METHYLATION [LARGE SCALE ANALYSIS] AT ARG-166</scope>
    <scope>IDENTIFICATION BY MASS SPECTROMETRY [LARGE SCALE ANALYSIS]</scope>
    <source>
        <tissue>Colon carcinoma</tissue>
    </source>
</reference>
<reference key="12">
    <citation type="journal article" date="2016" name="Oncotarget">
        <title>UBAP2 negatively regulates the invasion of hepatocellular carcinoma cell by ubiquitinating and degradating Annexin A2.</title>
        <authorList>
            <person name="Bai D.S."/>
            <person name="Wu C."/>
            <person name="Yang L.X."/>
            <person name="Zhang C."/>
            <person name="Zhang P.F."/>
            <person name="He Y.Z."/>
            <person name="Cai J.B."/>
            <person name="Song Z.J."/>
            <person name="Dong Z.R."/>
            <person name="Huang X.Y."/>
            <person name="Ke A.W."/>
            <person name="Shi G.M."/>
        </authorList>
    </citation>
    <scope>FUNCTION</scope>
    <scope>INTERACTION WITH ANXA2</scope>
    <scope>SUBCELLULAR LOCATION</scope>
    <scope>INVOLVEMENT IN HEPATOCELLULAR CARCINOMA</scope>
</reference>
<reference key="13">
    <citation type="journal article" date="2022" name="DNA Repair">
        <title>UBAP2/UBAP2L regulate UV-induced ubiquitylation of RNA polymerase II and are the human orthologues of yeast Def1.</title>
        <authorList>
            <person name="Herlihy A.E."/>
            <person name="Boeing S."/>
            <person name="Weems J.C."/>
            <person name="Walker J."/>
            <person name="Dirac-Svejstrup A.B."/>
            <person name="Lehner M.H."/>
            <person name="Conaway R.C."/>
            <person name="Conaway J.W."/>
            <person name="Svejstrup J.Q."/>
        </authorList>
    </citation>
    <scope>FUNCTION</scope>
    <scope>SUBCELLULAR LOCATION</scope>
</reference>
<gene>
    <name evidence="11" type="primary">UBAP2</name>
    <name evidence="13" type="synonym">KIAA1491</name>
</gene>
<evidence type="ECO:0000255" key="1"/>
<evidence type="ECO:0000256" key="2">
    <source>
        <dbReference type="SAM" id="MobiDB-lite"/>
    </source>
</evidence>
<evidence type="ECO:0000269" key="3">
    <source>
    </source>
</evidence>
<evidence type="ECO:0000269" key="4">
    <source>
    </source>
</evidence>
<evidence type="ECO:0000269" key="5">
    <source>
    </source>
</evidence>
<evidence type="ECO:0000269" key="6">
    <source>
    </source>
</evidence>
<evidence type="ECO:0000303" key="7">
    <source>
    </source>
</evidence>
<evidence type="ECO:0000303" key="8">
    <source>
    </source>
</evidence>
<evidence type="ECO:0000305" key="9"/>
<evidence type="ECO:0000312" key="10">
    <source>
        <dbReference type="EMBL" id="AAH07890.1"/>
    </source>
</evidence>
<evidence type="ECO:0000312" key="11">
    <source>
        <dbReference type="EMBL" id="AAI11763.1"/>
    </source>
</evidence>
<evidence type="ECO:0000312" key="12">
    <source>
        <dbReference type="EMBL" id="AL354989"/>
    </source>
</evidence>
<evidence type="ECO:0000312" key="13">
    <source>
        <dbReference type="EMBL" id="BAA96015.1"/>
    </source>
</evidence>
<evidence type="ECO:0000312" key="14">
    <source>
        <dbReference type="EMBL" id="BAC11266.1"/>
    </source>
</evidence>
<evidence type="ECO:0007744" key="15">
    <source>
    </source>
</evidence>
<evidence type="ECO:0007744" key="16">
    <source>
    </source>
</evidence>
<evidence type="ECO:0007744" key="17">
    <source>
    </source>
</evidence>
<evidence type="ECO:0007744" key="18">
    <source>
    </source>
</evidence>
<protein>
    <recommendedName>
        <fullName>Ubiquitin-associated protein 2</fullName>
        <shortName>UBAP-2</shortName>
    </recommendedName>
    <alternativeName>
        <fullName evidence="8">RNA polymerase II degradation factor UBAP2</fullName>
    </alternativeName>
</protein>
<feature type="chain" id="PRO_0000270981" description="Ubiquitin-associated protein 2">
    <location>
        <begin position="1"/>
        <end position="1119"/>
    </location>
</feature>
<feature type="domain" description="UBA" evidence="1">
    <location>
        <begin position="48"/>
        <end position="92"/>
    </location>
</feature>
<feature type="region of interest" description="Disordered" evidence="2">
    <location>
        <begin position="1"/>
        <end position="26"/>
    </location>
</feature>
<feature type="region of interest" description="Disordered" evidence="2">
    <location>
        <begin position="110"/>
        <end position="202"/>
    </location>
</feature>
<feature type="region of interest" description="Disordered" evidence="2">
    <location>
        <begin position="385"/>
        <end position="476"/>
    </location>
</feature>
<feature type="region of interest" description="Disordered" evidence="2">
    <location>
        <begin position="622"/>
        <end position="736"/>
    </location>
</feature>
<feature type="region of interest" description="Disordered" evidence="2">
    <location>
        <begin position="853"/>
        <end position="905"/>
    </location>
</feature>
<feature type="region of interest" description="Disordered" evidence="2">
    <location>
        <begin position="937"/>
        <end position="966"/>
    </location>
</feature>
<feature type="region of interest" description="Disordered" evidence="2">
    <location>
        <begin position="982"/>
        <end position="1020"/>
    </location>
</feature>
<feature type="region of interest" description="Disordered" evidence="2">
    <location>
        <begin position="1082"/>
        <end position="1119"/>
    </location>
</feature>
<feature type="coiled-coil region" evidence="1">
    <location>
        <begin position="105"/>
        <end position="130"/>
    </location>
</feature>
<feature type="compositionally biased region" description="Basic and acidic residues" evidence="2">
    <location>
        <begin position="8"/>
        <end position="17"/>
    </location>
</feature>
<feature type="compositionally biased region" description="Basic and acidic residues" evidence="2">
    <location>
        <begin position="110"/>
        <end position="130"/>
    </location>
</feature>
<feature type="compositionally biased region" description="Basic residues" evidence="2">
    <location>
        <begin position="168"/>
        <end position="182"/>
    </location>
</feature>
<feature type="compositionally biased region" description="Low complexity" evidence="2">
    <location>
        <begin position="389"/>
        <end position="407"/>
    </location>
</feature>
<feature type="compositionally biased region" description="Low complexity" evidence="2">
    <location>
        <begin position="435"/>
        <end position="447"/>
    </location>
</feature>
<feature type="compositionally biased region" description="Polar residues" evidence="2">
    <location>
        <begin position="651"/>
        <end position="662"/>
    </location>
</feature>
<feature type="compositionally biased region" description="Low complexity" evidence="2">
    <location>
        <begin position="663"/>
        <end position="678"/>
    </location>
</feature>
<feature type="compositionally biased region" description="Polar residues" evidence="2">
    <location>
        <begin position="679"/>
        <end position="694"/>
    </location>
</feature>
<feature type="compositionally biased region" description="Low complexity" evidence="2">
    <location>
        <begin position="695"/>
        <end position="736"/>
    </location>
</feature>
<feature type="compositionally biased region" description="Low complexity" evidence="2">
    <location>
        <begin position="874"/>
        <end position="900"/>
    </location>
</feature>
<feature type="compositionally biased region" description="Polar residues" evidence="2">
    <location>
        <begin position="943"/>
        <end position="957"/>
    </location>
</feature>
<feature type="compositionally biased region" description="Low complexity" evidence="2">
    <location>
        <begin position="1002"/>
        <end position="1011"/>
    </location>
</feature>
<feature type="compositionally biased region" description="Low complexity" evidence="2">
    <location>
        <begin position="1088"/>
        <end position="1102"/>
    </location>
</feature>
<feature type="modified residue" description="Omega-N-methylarginine" evidence="18">
    <location>
        <position position="166"/>
    </location>
</feature>
<feature type="modified residue" description="Phosphoserine" evidence="15 17">
    <location>
        <position position="432"/>
    </location>
</feature>
<feature type="modified residue" description="Phosphoserine" evidence="17">
    <location>
        <position position="439"/>
    </location>
</feature>
<feature type="modified residue" description="Phosphoserine" evidence="15 16 17">
    <location>
        <position position="473"/>
    </location>
</feature>
<feature type="modified residue" description="Phosphoserine" evidence="17">
    <location>
        <position position="630"/>
    </location>
</feature>
<feature type="splice variant" id="VSP_056073" description="In isoform 2." evidence="7">
    <location>
        <begin position="1"/>
        <end position="761"/>
    </location>
</feature>
<feature type="sequence variant" id="VAR_052677" description="In dbSNP:rs1785506.">
    <original>R</original>
    <variation>Q</variation>
    <location>
        <position position="14"/>
    </location>
</feature>
<feature type="sequence variant" id="VAR_052678" description="In dbSNP:rs10971809.">
    <original>P</original>
    <variation>L</variation>
    <location>
        <position position="429"/>
    </location>
</feature>
<feature type="sequence variant" id="VAR_029834" description="In dbSNP:rs307658." evidence="4">
    <original>N</original>
    <variation>S</variation>
    <location>
        <position position="606"/>
    </location>
</feature>
<feature type="sequence variant" id="VAR_029835" description="In dbSNP:rs307692." evidence="3 4">
    <original>A</original>
    <variation>V</variation>
    <location>
        <position position="756"/>
    </location>
</feature>
<feature type="sequence variant" id="VAR_052679" description="In dbSNP:rs16935295.">
    <original>M</original>
    <variation>I</variation>
    <location>
        <position position="762"/>
    </location>
</feature>
<dbReference type="EMBL" id="AK074884">
    <property type="protein sequence ID" value="BAC11266.1"/>
    <property type="status" value="ALT_INIT"/>
    <property type="molecule type" value="mRNA"/>
</dbReference>
<dbReference type="EMBL" id="AK125935">
    <property type="protein sequence ID" value="BAG54267.1"/>
    <property type="molecule type" value="mRNA"/>
</dbReference>
<dbReference type="EMBL" id="AL139113">
    <property type="status" value="NOT_ANNOTATED_CDS"/>
    <property type="molecule type" value="Genomic_DNA"/>
</dbReference>
<dbReference type="EMBL" id="AL354989">
    <property type="status" value="NOT_ANNOTATED_CDS"/>
    <property type="molecule type" value="Genomic_DNA"/>
</dbReference>
<dbReference type="EMBL" id="BC007890">
    <property type="protein sequence ID" value="AAH07890.1"/>
    <property type="molecule type" value="mRNA"/>
</dbReference>
<dbReference type="EMBL" id="BC111762">
    <property type="protein sequence ID" value="AAI11763.1"/>
    <property type="status" value="ALT_INIT"/>
    <property type="molecule type" value="mRNA"/>
</dbReference>
<dbReference type="EMBL" id="AB040924">
    <property type="protein sequence ID" value="BAA96015.1"/>
    <property type="molecule type" value="mRNA"/>
</dbReference>
<dbReference type="CCDS" id="CCDS6547.1">
    <molecule id="Q5T6F2-1"/>
</dbReference>
<dbReference type="RefSeq" id="NP_001269458.1">
    <property type="nucleotide sequence ID" value="NM_001282529.1"/>
</dbReference>
<dbReference type="RefSeq" id="NP_001269459.1">
    <molecule id="Q5T6F2-2"/>
    <property type="nucleotide sequence ID" value="NM_001282530.2"/>
</dbReference>
<dbReference type="RefSeq" id="NP_001356988.2">
    <molecule id="Q5T6F2-1"/>
    <property type="nucleotide sequence ID" value="NM_001370059.2"/>
</dbReference>
<dbReference type="RefSeq" id="NP_001356991.2">
    <molecule id="Q5T6F2-1"/>
    <property type="nucleotide sequence ID" value="NM_001370062.2"/>
</dbReference>
<dbReference type="RefSeq" id="NP_060919.3">
    <molecule id="Q5T6F2-1"/>
    <property type="nucleotide sequence ID" value="NM_018449.3"/>
</dbReference>
<dbReference type="SMR" id="Q5T6F2"/>
<dbReference type="BioGRID" id="120938">
    <property type="interactions" value="176"/>
</dbReference>
<dbReference type="FunCoup" id="Q5T6F2">
    <property type="interactions" value="3357"/>
</dbReference>
<dbReference type="IntAct" id="Q5T6F2">
    <property type="interactions" value="91"/>
</dbReference>
<dbReference type="MINT" id="Q5T6F2"/>
<dbReference type="STRING" id="9606.ENSP00000354039"/>
<dbReference type="GlyCosmos" id="Q5T6F2">
    <property type="glycosylation" value="36 sites, 2 glycans"/>
</dbReference>
<dbReference type="GlyGen" id="Q5T6F2">
    <property type="glycosylation" value="61 sites, 2 N-linked glycans (2 sites), 3 O-linked glycans (58 sites)"/>
</dbReference>
<dbReference type="iPTMnet" id="Q5T6F2"/>
<dbReference type="MetOSite" id="Q5T6F2"/>
<dbReference type="PhosphoSitePlus" id="Q5T6F2"/>
<dbReference type="BioMuta" id="UBAP2"/>
<dbReference type="DMDM" id="74745207"/>
<dbReference type="jPOST" id="Q5T6F2"/>
<dbReference type="MassIVE" id="Q5T6F2"/>
<dbReference type="PaxDb" id="9606-ENSP00000368540"/>
<dbReference type="PeptideAtlas" id="Q5T6F2"/>
<dbReference type="ProteomicsDB" id="63305"/>
<dbReference type="ProteomicsDB" id="64579">
    <molecule id="Q5T6F2-1"/>
</dbReference>
<dbReference type="Pumba" id="Q5T6F2"/>
<dbReference type="Antibodypedia" id="11067">
    <property type="antibodies" value="82 antibodies from 21 providers"/>
</dbReference>
<dbReference type="DNASU" id="55833"/>
<dbReference type="Ensembl" id="ENST00000379238.7">
    <molecule id="Q5T6F2-1"/>
    <property type="protein sequence ID" value="ENSP00000368540.2"/>
    <property type="gene ID" value="ENSG00000137073.24"/>
</dbReference>
<dbReference type="Ensembl" id="ENST00000682239.1">
    <molecule id="Q5T6F2-1"/>
    <property type="protein sequence ID" value="ENSP00000507293.1"/>
    <property type="gene ID" value="ENSG00000137073.24"/>
</dbReference>
<dbReference type="Ensembl" id="ENST00000684158.1">
    <molecule id="Q5T6F2-1"/>
    <property type="protein sequence ID" value="ENSP00000508372.1"/>
    <property type="gene ID" value="ENSG00000137073.24"/>
</dbReference>
<dbReference type="GeneID" id="55833"/>
<dbReference type="KEGG" id="hsa:55833"/>
<dbReference type="MANE-Select" id="ENST00000379238.7">
    <property type="protein sequence ID" value="ENSP00000368540.2"/>
    <property type="RefSeq nucleotide sequence ID" value="NM_001370062.2"/>
    <property type="RefSeq protein sequence ID" value="NP_001356991.2"/>
</dbReference>
<dbReference type="UCSC" id="uc003zto.2">
    <molecule id="Q5T6F2-1"/>
    <property type="organism name" value="human"/>
</dbReference>
<dbReference type="AGR" id="HGNC:14185"/>
<dbReference type="CTD" id="55833"/>
<dbReference type="DisGeNET" id="55833"/>
<dbReference type="GeneCards" id="UBAP2"/>
<dbReference type="HGNC" id="HGNC:14185">
    <property type="gene designation" value="UBAP2"/>
</dbReference>
<dbReference type="HPA" id="ENSG00000137073">
    <property type="expression patterns" value="Low tissue specificity"/>
</dbReference>
<dbReference type="neXtProt" id="NX_Q5T6F2"/>
<dbReference type="OpenTargets" id="ENSG00000137073"/>
<dbReference type="PharmGKB" id="PA38379"/>
<dbReference type="VEuPathDB" id="HostDB:ENSG00000137073"/>
<dbReference type="eggNOG" id="ENOG502QPRH">
    <property type="taxonomic scope" value="Eukaryota"/>
</dbReference>
<dbReference type="GeneTree" id="ENSGT00390000003453"/>
<dbReference type="HOGENOM" id="CLU_009850_0_0_1"/>
<dbReference type="InParanoid" id="Q5T6F2"/>
<dbReference type="OMA" id="SPSIDEC"/>
<dbReference type="OrthoDB" id="5918007at2759"/>
<dbReference type="PAN-GO" id="Q5T6F2">
    <property type="GO annotations" value="2 GO annotations based on evolutionary models"/>
</dbReference>
<dbReference type="PhylomeDB" id="Q5T6F2"/>
<dbReference type="TreeFam" id="TF328468"/>
<dbReference type="PathwayCommons" id="Q5T6F2"/>
<dbReference type="SignaLink" id="Q5T6F2"/>
<dbReference type="SIGNOR" id="Q5T6F2"/>
<dbReference type="BioGRID-ORCS" id="55833">
    <property type="hits" value="15 hits in 1168 CRISPR screens"/>
</dbReference>
<dbReference type="CD-CODE" id="232F8A39">
    <property type="entry name" value="P-body"/>
</dbReference>
<dbReference type="CD-CODE" id="DEE660B4">
    <property type="entry name" value="Stress granule"/>
</dbReference>
<dbReference type="ChiTaRS" id="UBAP2">
    <property type="organism name" value="human"/>
</dbReference>
<dbReference type="GeneWiki" id="UBAP2"/>
<dbReference type="GenomeRNAi" id="55833"/>
<dbReference type="Pharos" id="Q5T6F2">
    <property type="development level" value="Tbio"/>
</dbReference>
<dbReference type="PRO" id="PR:Q5T6F2"/>
<dbReference type="Proteomes" id="UP000005640">
    <property type="component" value="Chromosome 9"/>
</dbReference>
<dbReference type="RNAct" id="Q5T6F2">
    <property type="molecule type" value="protein"/>
</dbReference>
<dbReference type="Bgee" id="ENSG00000137073">
    <property type="expression patterns" value="Expressed in sperm and 201 other cell types or tissues"/>
</dbReference>
<dbReference type="ExpressionAtlas" id="Q5T6F2">
    <property type="expression patterns" value="baseline and differential"/>
</dbReference>
<dbReference type="GO" id="GO:0005694">
    <property type="term" value="C:chromosome"/>
    <property type="evidence" value="ECO:0007669"/>
    <property type="project" value="UniProtKB-SubCell"/>
</dbReference>
<dbReference type="GO" id="GO:0005737">
    <property type="term" value="C:cytoplasm"/>
    <property type="evidence" value="ECO:0000318"/>
    <property type="project" value="GO_Central"/>
</dbReference>
<dbReference type="GO" id="GO:0005634">
    <property type="term" value="C:nucleus"/>
    <property type="evidence" value="ECO:0000318"/>
    <property type="project" value="GO_Central"/>
</dbReference>
<dbReference type="GO" id="GO:0000932">
    <property type="term" value="C:P-body"/>
    <property type="evidence" value="ECO:0000250"/>
    <property type="project" value="FlyBase"/>
</dbReference>
<dbReference type="GO" id="GO:0045296">
    <property type="term" value="F:cadherin binding"/>
    <property type="evidence" value="ECO:0007005"/>
    <property type="project" value="BHF-UCL"/>
</dbReference>
<dbReference type="GO" id="GO:0003723">
    <property type="term" value="F:RNA binding"/>
    <property type="evidence" value="ECO:0007005"/>
    <property type="project" value="UniProtKB"/>
</dbReference>
<dbReference type="GO" id="GO:0010468">
    <property type="term" value="P:regulation of gene expression"/>
    <property type="evidence" value="ECO:0000250"/>
    <property type="project" value="FlyBase"/>
</dbReference>
<dbReference type="CDD" id="cd14277">
    <property type="entry name" value="UBA_UBP2_like"/>
    <property type="match status" value="1"/>
</dbReference>
<dbReference type="FunFam" id="1.10.8.10:FF:000004">
    <property type="entry name" value="ubiquitin-associated protein 2-like isoform X1"/>
    <property type="match status" value="1"/>
</dbReference>
<dbReference type="Gene3D" id="1.10.8.10">
    <property type="entry name" value="DNA helicase RuvA subunit, C-terminal domain"/>
    <property type="match status" value="1"/>
</dbReference>
<dbReference type="InterPro" id="IPR051833">
    <property type="entry name" value="TC-DDR_regulator"/>
</dbReference>
<dbReference type="InterPro" id="IPR015940">
    <property type="entry name" value="UBA"/>
</dbReference>
<dbReference type="InterPro" id="IPR009060">
    <property type="entry name" value="UBA-like_sf"/>
</dbReference>
<dbReference type="InterPro" id="IPR022166">
    <property type="entry name" value="UBAP2/Lig"/>
</dbReference>
<dbReference type="PANTHER" id="PTHR16308">
    <property type="entry name" value="UBIQUITIN ASSOCIATED PROTEIN 2-LIKE/LINGERER"/>
    <property type="match status" value="1"/>
</dbReference>
<dbReference type="PANTHER" id="PTHR16308:SF19">
    <property type="entry name" value="UBIQUITIN-ASSOCIATED PROTEIN 2"/>
    <property type="match status" value="1"/>
</dbReference>
<dbReference type="Pfam" id="PF12478">
    <property type="entry name" value="UBAP2-Lig"/>
    <property type="match status" value="1"/>
</dbReference>
<dbReference type="SMART" id="SM00165">
    <property type="entry name" value="UBA"/>
    <property type="match status" value="1"/>
</dbReference>
<dbReference type="SUPFAM" id="SSF46934">
    <property type="entry name" value="UBA-like"/>
    <property type="match status" value="1"/>
</dbReference>
<accession>Q5T6F2</accession>
<accession>Q2M2R4</accession>
<accession>Q5JV03</accession>
<accession>Q6PK34</accession>
<accession>Q8NC94</accession>
<accession>Q9P237</accession>
<sequence>MMTSVSSDHCRGAREKPQISAAQSTQPQKQVVQATAEQMRLAQVIFDKNDSDFEAKVKQLMEVTGKNQDECIVALHDCNGDVNKAINILLEGNSDTTSWETVGCKKKNFAKENSENKENREKKSEKESSRGRGNNNRKGRGGNRGREFRGEENGIDCNQVDKPSDRGKRARGRGFGRGRGRGAGRFSTQGMGTFNPADYSDSTSTDVCGTKLVVWEAAQNGADEGTELASNTHNIAQDLSNKSSYGLKGAWKNSVEEWTTEDWTEDLSETKVFTASSAPAENHILPGQSIDLVALLQKPVPHSQASEANSFETSQQQGFGQALVFTNSQHNNQMAPGTGSSTAVNSCSPQSLSSVLGSGFGELAPPKMANITSSQILDQLKAPSLGQFTTTPSTQQNSTSHPTTTTSWDLKPPTSQSSVLSHLDFKSQPEPSPVLSQLSQRQQHQSQAVTVPPPGLESFPSQAKLRESTPGDSPSTVNKLLQLPSTTIENISVSVHQPQPKHIKLAKRRIPPASKIPASAVEMPGSADVTGLNVQFGALEFGSEPSLSEFGSAPSSENSNQIPISLYSKSLSEPLNTSLSMTSAVQNSTYTTSVITSCSLTSSSLNSASPVAMSSSYDQSSVHNRIPYQSPVSSSESAPGTIMNGHGGGRSQQTLDTPKTTGPPSALPSVSSLPSTTSCTALLPSTSQHTGDLTSSPLSQLSSSLSSHQSSLSAHAALSSSTSHTHASVESASSHQSSATFSTAATSVSSSASSGASLSSSMNTANSLCLGGTPASASSSSSRAAPLVTSGKAPPNLPQGVPPLLHNQYLVGPGGLLPAYPIYGYDELQMLQSRLPVDYYGIPFAAPTALASRDGSLANNPYPGDVTKFGRGDSASPAPATTPAQPQQSQSQTHHTAQQPFVNPALPPGYSYTGLPYYTGMPSAFQYGPTMFVPPASAKQHGVNLSTPTPPFQQASGYGQHGYSTGYDDLTQGTAAGDYSKGGYAGSSQAPNKSAGSGPGKGVSVSSSTTGLPDMTGSVYNKTQTFDKQGFHAGTPPPFSLPSVLGSTGPLASGAAPGYAPPPFLHILPAHQQPHSQLLHHHLPQDAQSGSGQRSQPSSLQPKSQASKPAYGNSPYWTN</sequence>
<organism>
    <name type="scientific">Homo sapiens</name>
    <name type="common">Human</name>
    <dbReference type="NCBI Taxonomy" id="9606"/>
    <lineage>
        <taxon>Eukaryota</taxon>
        <taxon>Metazoa</taxon>
        <taxon>Chordata</taxon>
        <taxon>Craniata</taxon>
        <taxon>Vertebrata</taxon>
        <taxon>Euteleostomi</taxon>
        <taxon>Mammalia</taxon>
        <taxon>Eutheria</taxon>
        <taxon>Euarchontoglires</taxon>
        <taxon>Primates</taxon>
        <taxon>Haplorrhini</taxon>
        <taxon>Catarrhini</taxon>
        <taxon>Hominidae</taxon>
        <taxon>Homo</taxon>
    </lineage>
</organism>
<keyword id="KW-0025">Alternative splicing</keyword>
<keyword id="KW-0158">Chromosome</keyword>
<keyword id="KW-0175">Coiled coil</keyword>
<keyword id="KW-0963">Cytoplasm</keyword>
<keyword id="KW-0488">Methylation</keyword>
<keyword id="KW-0539">Nucleus</keyword>
<keyword id="KW-0597">Phosphoprotein</keyword>
<keyword id="KW-1267">Proteomics identification</keyword>
<keyword id="KW-1185">Reference proteome</keyword>
<proteinExistence type="evidence at protein level"/>